<reference key="1">
    <citation type="journal article" date="1989" name="Biochemistry">
        <title>Primary structure of a protein C activator from Agkistrodon contortrix contortrix venom.</title>
        <authorList>
            <person name="McMullen B.A."/>
            <person name="Fujikawa K."/>
            <person name="Kisiel W."/>
        </authorList>
    </citation>
    <scope>PROTEIN SEQUENCE</scope>
    <scope>GLYCOSYLATION AT ASN-21; ASN-78 AND ASN-129</scope>
    <source>
        <tissue>Venom</tissue>
    </source>
</reference>
<reference key="2">
    <citation type="journal article" date="1987" name="J. Biol. Chem.">
        <title>Characterization of a protein C activator from Agkistrodon contortrix contortrix venom.</title>
        <authorList>
            <person name="Kisiel W."/>
            <person name="Kondo S."/>
            <person name="Smith K.J."/>
            <person name="McMullen B.A."/>
            <person name="Smith L.F."/>
        </authorList>
    </citation>
    <scope>PROTEIN SEQUENCE OF 1-63</scope>
    <scope>FUNCTION</scope>
    <source>
        <tissue>Venom</tissue>
    </source>
</reference>
<reference key="3">
    <citation type="journal article" date="2005" name="J. Biol. Chem.">
        <title>Thrombomodulin-independent activation of protein C and specificity of hemostatically active snake venom serine proteinases: crystal structures of native and inhibited Agkistrodon contortrix contortrix protein C activator.</title>
        <authorList>
            <person name="Murakami M.T."/>
            <person name="Arni R.K."/>
        </authorList>
    </citation>
    <scope>X-RAY CRYSTALLOGRAPHY (1.54 ANGSTROMS)</scope>
    <scope>ACTIVE SITE</scope>
    <scope>DISULFIDE BONDS</scope>
    <scope>GLYCOSYLATION AT ASN-21; ASN-78 AND ASN-129</scope>
</reference>
<reference key="4">
    <citation type="journal article" date="2001" name="Haemostasis">
        <title>Protein C activators from snake venoms and their diagnostic use.</title>
        <authorList>
            <person name="Gempeler-Messina P.M."/>
            <person name="Volz K."/>
            <person name="Buhler B."/>
            <person name="Muller C."/>
        </authorList>
    </citation>
    <scope>BIOTECHNOLOGY</scope>
</reference>
<evidence type="ECO:0000255" key="1">
    <source>
        <dbReference type="PROSITE-ProRule" id="PRU00274"/>
    </source>
</evidence>
<evidence type="ECO:0000269" key="2">
    <source>
    </source>
</evidence>
<evidence type="ECO:0000269" key="3">
    <source>
    </source>
</evidence>
<evidence type="ECO:0000269" key="4">
    <source>
    </source>
</evidence>
<evidence type="ECO:0000269" key="5">
    <source>
    </source>
</evidence>
<evidence type="ECO:0007744" key="6">
    <source>
        <dbReference type="PDB" id="2AIP"/>
    </source>
</evidence>
<evidence type="ECO:0007744" key="7">
    <source>
        <dbReference type="PDB" id="2AIQ"/>
    </source>
</evidence>
<evidence type="ECO:0007829" key="8">
    <source>
        <dbReference type="PDB" id="2AIQ"/>
    </source>
</evidence>
<keyword id="KW-0002">3D-structure</keyword>
<keyword id="KW-1203">Blood coagulation cascade inhibiting toxin</keyword>
<keyword id="KW-0903">Direct protein sequencing</keyword>
<keyword id="KW-1015">Disulfide bond</keyword>
<keyword id="KW-0325">Glycoprotein</keyword>
<keyword id="KW-1199">Hemostasis impairing toxin</keyword>
<keyword id="KW-0378">Hydrolase</keyword>
<keyword id="KW-0645">Protease</keyword>
<keyword id="KW-0964">Secreted</keyword>
<keyword id="KW-0720">Serine protease</keyword>
<keyword id="KW-0800">Toxin</keyword>
<proteinExistence type="evidence at protein level"/>
<dbReference type="EC" id="3.4.21.-"/>
<dbReference type="PIR" id="A60468">
    <property type="entry name" value="A60468"/>
</dbReference>
<dbReference type="PDB" id="2AIP">
    <property type="method" value="X-ray"/>
    <property type="resolution" value="1.65 A"/>
    <property type="chains" value="A=1-231"/>
</dbReference>
<dbReference type="PDB" id="2AIQ">
    <property type="method" value="X-ray"/>
    <property type="resolution" value="1.54 A"/>
    <property type="chains" value="A=1-231"/>
</dbReference>
<dbReference type="PDBsum" id="2AIP"/>
<dbReference type="PDBsum" id="2AIQ"/>
<dbReference type="SMR" id="P09872"/>
<dbReference type="MEROPS" id="S01.466"/>
<dbReference type="iPTMnet" id="P09872"/>
<dbReference type="EvolutionaryTrace" id="P09872"/>
<dbReference type="GO" id="GO:0005576">
    <property type="term" value="C:extracellular region"/>
    <property type="evidence" value="ECO:0007669"/>
    <property type="project" value="UniProtKB-SubCell"/>
</dbReference>
<dbReference type="GO" id="GO:0030141">
    <property type="term" value="C:secretory granule"/>
    <property type="evidence" value="ECO:0007669"/>
    <property type="project" value="TreeGrafter"/>
</dbReference>
<dbReference type="GO" id="GO:0004252">
    <property type="term" value="F:serine-type endopeptidase activity"/>
    <property type="evidence" value="ECO:0007669"/>
    <property type="project" value="InterPro"/>
</dbReference>
<dbReference type="GO" id="GO:0090729">
    <property type="term" value="F:toxin activity"/>
    <property type="evidence" value="ECO:0007669"/>
    <property type="project" value="UniProtKB-KW"/>
</dbReference>
<dbReference type="GO" id="GO:0006508">
    <property type="term" value="P:proteolysis"/>
    <property type="evidence" value="ECO:0007669"/>
    <property type="project" value="UniProtKB-KW"/>
</dbReference>
<dbReference type="CDD" id="cd00190">
    <property type="entry name" value="Tryp_SPc"/>
    <property type="match status" value="1"/>
</dbReference>
<dbReference type="FunFam" id="2.40.10.10:FF:000158">
    <property type="entry name" value="Thrombin-like enzyme saxthrombin"/>
    <property type="match status" value="1"/>
</dbReference>
<dbReference type="FunFam" id="2.40.10.10:FF:000153">
    <property type="entry name" value="Venom plasminogen activator TSV-PA"/>
    <property type="match status" value="1"/>
</dbReference>
<dbReference type="Gene3D" id="2.40.10.10">
    <property type="entry name" value="Trypsin-like serine proteases"/>
    <property type="match status" value="2"/>
</dbReference>
<dbReference type="InterPro" id="IPR009003">
    <property type="entry name" value="Peptidase_S1_PA"/>
</dbReference>
<dbReference type="InterPro" id="IPR043504">
    <property type="entry name" value="Peptidase_S1_PA_chymotrypsin"/>
</dbReference>
<dbReference type="InterPro" id="IPR001314">
    <property type="entry name" value="Peptidase_S1A"/>
</dbReference>
<dbReference type="InterPro" id="IPR001254">
    <property type="entry name" value="Trypsin_dom"/>
</dbReference>
<dbReference type="InterPro" id="IPR033116">
    <property type="entry name" value="TRYPSIN_SER"/>
</dbReference>
<dbReference type="PANTHER" id="PTHR24271:SF47">
    <property type="entry name" value="KALLIKREIN-1"/>
    <property type="match status" value="1"/>
</dbReference>
<dbReference type="PANTHER" id="PTHR24271">
    <property type="entry name" value="KALLIKREIN-RELATED"/>
    <property type="match status" value="1"/>
</dbReference>
<dbReference type="Pfam" id="PF00089">
    <property type="entry name" value="Trypsin"/>
    <property type="match status" value="1"/>
</dbReference>
<dbReference type="PRINTS" id="PR00722">
    <property type="entry name" value="CHYMOTRYPSIN"/>
</dbReference>
<dbReference type="SMART" id="SM00020">
    <property type="entry name" value="Tryp_SPc"/>
    <property type="match status" value="1"/>
</dbReference>
<dbReference type="SUPFAM" id="SSF50494">
    <property type="entry name" value="Trypsin-like serine proteases"/>
    <property type="match status" value="1"/>
</dbReference>
<dbReference type="PROSITE" id="PS50240">
    <property type="entry name" value="TRYPSIN_DOM"/>
    <property type="match status" value="1"/>
</dbReference>
<dbReference type="PROSITE" id="PS00135">
    <property type="entry name" value="TRYPSIN_SER"/>
    <property type="match status" value="1"/>
</dbReference>
<protein>
    <recommendedName>
        <fullName>Protein C activator</fullName>
        <ecNumber>3.4.21.-</ecNumber>
    </recommendedName>
    <alternativeName>
        <fullName>ACC-C</fullName>
    </alternativeName>
    <alternativeName>
        <fullName>Snake venom serine protease</fullName>
        <shortName>SVSP</shortName>
    </alternativeName>
</protein>
<name>VSPCA_AGKCO</name>
<comment type="function">
    <text evidence="5">Snake venom serine protease that selectively cleaves the heavy chain of protein C (PROC). This activation is thrombomodulin-independent.</text>
</comment>
<comment type="subunit">
    <text>Monomer.</text>
</comment>
<comment type="subcellular location">
    <subcellularLocation>
        <location>Secreted</location>
    </subcellularLocation>
</comment>
<comment type="tissue specificity">
    <text>Expressed by the venom gland.</text>
</comment>
<comment type="biotechnology">
    <text evidence="2">Is used in diagnostic practice for the determination of disorders in the PC pathway. Functional assays are either clotting assays or based on determinations using chromogenic assays. Sold under the name Protac by Pentapharm.</text>
</comment>
<comment type="similarity">
    <text evidence="1">Belongs to the peptidase S1 family. Snake venom subfamily.</text>
</comment>
<accession>P09872</accession>
<feature type="chain" id="PRO_0000088726" description="Protein C activator">
    <location>
        <begin position="1"/>
        <end position="231"/>
    </location>
</feature>
<feature type="domain" description="Peptidase S1" evidence="1">
    <location>
        <begin position="1"/>
        <end position="222"/>
    </location>
</feature>
<feature type="active site" description="Charge relay system" evidence="3">
    <location>
        <position position="40"/>
    </location>
</feature>
<feature type="active site" description="Charge relay system" evidence="3">
    <location>
        <position position="85"/>
    </location>
</feature>
<feature type="active site" description="Charge relay system" evidence="3">
    <location>
        <position position="177"/>
    </location>
</feature>
<feature type="glycosylation site" description="N-linked (GlcNAc...) asparagine" evidence="3 4">
    <location>
        <position position="21"/>
    </location>
</feature>
<feature type="glycosylation site" description="N-linked (GlcNAc...) asparagine" evidence="3 4">
    <location>
        <position position="78"/>
    </location>
</feature>
<feature type="glycosylation site" description="N-linked (GlcNAc...) asparagine" evidence="3 4">
    <location>
        <position position="129"/>
    </location>
</feature>
<feature type="disulfide bond" evidence="3 6 7">
    <location>
        <begin position="7"/>
        <end position="138"/>
    </location>
</feature>
<feature type="disulfide bond" evidence="1 3 6 7">
    <location>
        <begin position="25"/>
        <end position="41"/>
    </location>
</feature>
<feature type="disulfide bond" evidence="3 6 7">
    <location>
        <begin position="73"/>
        <end position="229"/>
    </location>
</feature>
<feature type="disulfide bond" evidence="1 3 6 7">
    <location>
        <begin position="117"/>
        <end position="183"/>
    </location>
</feature>
<feature type="disulfide bond" evidence="1 3 6 7">
    <location>
        <begin position="149"/>
        <end position="162"/>
    </location>
</feature>
<feature type="disulfide bond" evidence="1 3 6 7">
    <location>
        <begin position="173"/>
        <end position="198"/>
    </location>
</feature>
<feature type="strand" evidence="8">
    <location>
        <begin position="15"/>
        <end position="20"/>
    </location>
</feature>
<feature type="strand" evidence="8">
    <location>
        <begin position="23"/>
        <end position="29"/>
    </location>
</feature>
<feature type="strand" evidence="8">
    <location>
        <begin position="31"/>
        <end position="37"/>
    </location>
</feature>
<feature type="helix" evidence="8">
    <location>
        <begin position="39"/>
        <end position="41"/>
    </location>
</feature>
<feature type="strand" evidence="8">
    <location>
        <begin position="47"/>
        <end position="51"/>
    </location>
</feature>
<feature type="strand" evidence="8">
    <location>
        <begin position="63"/>
        <end position="65"/>
    </location>
</feature>
<feature type="strand" evidence="8">
    <location>
        <begin position="67"/>
        <end position="71"/>
    </location>
</feature>
<feature type="strand" evidence="8">
    <location>
        <begin position="78"/>
        <end position="80"/>
    </location>
</feature>
<feature type="turn" evidence="8">
    <location>
        <begin position="81"/>
        <end position="84"/>
    </location>
</feature>
<feature type="strand" evidence="8">
    <location>
        <begin position="87"/>
        <end position="93"/>
    </location>
</feature>
<feature type="strand" evidence="8">
    <location>
        <begin position="116"/>
        <end position="123"/>
    </location>
</feature>
<feature type="strand" evidence="8">
    <location>
        <begin position="125"/>
        <end position="129"/>
    </location>
</feature>
<feature type="strand" evidence="8">
    <location>
        <begin position="137"/>
        <end position="144"/>
    </location>
</feature>
<feature type="helix" evidence="8">
    <location>
        <begin position="146"/>
        <end position="152"/>
    </location>
</feature>
<feature type="strand" evidence="8">
    <location>
        <begin position="158"/>
        <end position="164"/>
    </location>
</feature>
<feature type="strand" evidence="8">
    <location>
        <begin position="180"/>
        <end position="183"/>
    </location>
</feature>
<feature type="strand" evidence="8">
    <location>
        <begin position="186"/>
        <end position="194"/>
    </location>
</feature>
<feature type="strand" evidence="8">
    <location>
        <begin position="205"/>
        <end position="209"/>
    </location>
</feature>
<feature type="helix" evidence="8">
    <location>
        <begin position="210"/>
        <end position="213"/>
    </location>
</feature>
<feature type="helix" evidence="8">
    <location>
        <begin position="214"/>
        <end position="222"/>
    </location>
</feature>
<organism>
    <name type="scientific">Agkistrodon contortrix contortrix</name>
    <name type="common">Southern copperhead</name>
    <dbReference type="NCBI Taxonomy" id="8713"/>
    <lineage>
        <taxon>Eukaryota</taxon>
        <taxon>Metazoa</taxon>
        <taxon>Chordata</taxon>
        <taxon>Craniata</taxon>
        <taxon>Vertebrata</taxon>
        <taxon>Euteleostomi</taxon>
        <taxon>Lepidosauria</taxon>
        <taxon>Squamata</taxon>
        <taxon>Bifurcata</taxon>
        <taxon>Unidentata</taxon>
        <taxon>Episquamata</taxon>
        <taxon>Toxicofera</taxon>
        <taxon>Serpentes</taxon>
        <taxon>Colubroidea</taxon>
        <taxon>Viperidae</taxon>
        <taxon>Crotalinae</taxon>
        <taxon>Agkistrodon</taxon>
    </lineage>
</organism>
<sequence length="231" mass="25106">VIGGDECNINEHRFLALVYANGSLCGGTLINQEWVLTARHCDRGNMRIYLGMHNLKVLNKDALRRFPKEKYFCLNTRNDTIWDKDIMLIRLNRPVRNSAHIAPLSLPSNPPSVGSVCRIMGWGTITSPNATLPDVPHCANINILDYAVCQAAYKGLAATTLCAGILEGGKDTCKGDSGGPLICNGQFQGILSVGGNPCAQPRKPGIYTKVFDYTDWIQSIISGNTDATCPP</sequence>